<name>RSMH_NOVAD</name>
<comment type="function">
    <text evidence="1">Specifically methylates the N4 position of cytidine in position 1402 (C1402) of 16S rRNA.</text>
</comment>
<comment type="catalytic activity">
    <reaction evidence="1">
        <text>cytidine(1402) in 16S rRNA + S-adenosyl-L-methionine = N(4)-methylcytidine(1402) in 16S rRNA + S-adenosyl-L-homocysteine + H(+)</text>
        <dbReference type="Rhea" id="RHEA:42928"/>
        <dbReference type="Rhea" id="RHEA-COMP:10286"/>
        <dbReference type="Rhea" id="RHEA-COMP:10287"/>
        <dbReference type="ChEBI" id="CHEBI:15378"/>
        <dbReference type="ChEBI" id="CHEBI:57856"/>
        <dbReference type="ChEBI" id="CHEBI:59789"/>
        <dbReference type="ChEBI" id="CHEBI:74506"/>
        <dbReference type="ChEBI" id="CHEBI:82748"/>
        <dbReference type="EC" id="2.1.1.199"/>
    </reaction>
</comment>
<comment type="subcellular location">
    <subcellularLocation>
        <location evidence="1">Cytoplasm</location>
    </subcellularLocation>
</comment>
<comment type="similarity">
    <text evidence="1">Belongs to the methyltransferase superfamily. RsmH family.</text>
</comment>
<dbReference type="EC" id="2.1.1.199" evidence="1"/>
<dbReference type="EMBL" id="CP000248">
    <property type="protein sequence ID" value="ABD25570.1"/>
    <property type="molecule type" value="Genomic_DNA"/>
</dbReference>
<dbReference type="RefSeq" id="WP_011444784.1">
    <property type="nucleotide sequence ID" value="NC_007794.1"/>
</dbReference>
<dbReference type="SMR" id="Q2G9A3"/>
<dbReference type="STRING" id="279238.Saro_1125"/>
<dbReference type="KEGG" id="nar:Saro_1125"/>
<dbReference type="eggNOG" id="COG0275">
    <property type="taxonomic scope" value="Bacteria"/>
</dbReference>
<dbReference type="HOGENOM" id="CLU_038422_1_1_5"/>
<dbReference type="Proteomes" id="UP000009134">
    <property type="component" value="Chromosome"/>
</dbReference>
<dbReference type="GO" id="GO:0005737">
    <property type="term" value="C:cytoplasm"/>
    <property type="evidence" value="ECO:0007669"/>
    <property type="project" value="UniProtKB-SubCell"/>
</dbReference>
<dbReference type="GO" id="GO:0071424">
    <property type="term" value="F:rRNA (cytosine-N4-)-methyltransferase activity"/>
    <property type="evidence" value="ECO:0007669"/>
    <property type="project" value="UniProtKB-UniRule"/>
</dbReference>
<dbReference type="GO" id="GO:0070475">
    <property type="term" value="P:rRNA base methylation"/>
    <property type="evidence" value="ECO:0007669"/>
    <property type="project" value="UniProtKB-UniRule"/>
</dbReference>
<dbReference type="Gene3D" id="1.10.150.170">
    <property type="entry name" value="Putative methyltransferase TM0872, insert domain"/>
    <property type="match status" value="1"/>
</dbReference>
<dbReference type="Gene3D" id="3.40.50.150">
    <property type="entry name" value="Vaccinia Virus protein VP39"/>
    <property type="match status" value="1"/>
</dbReference>
<dbReference type="HAMAP" id="MF_01007">
    <property type="entry name" value="16SrRNA_methyltr_H"/>
    <property type="match status" value="1"/>
</dbReference>
<dbReference type="InterPro" id="IPR002903">
    <property type="entry name" value="RsmH"/>
</dbReference>
<dbReference type="InterPro" id="IPR023397">
    <property type="entry name" value="SAM-dep_MeTrfase_MraW_recog"/>
</dbReference>
<dbReference type="InterPro" id="IPR029063">
    <property type="entry name" value="SAM-dependent_MTases_sf"/>
</dbReference>
<dbReference type="NCBIfam" id="TIGR00006">
    <property type="entry name" value="16S rRNA (cytosine(1402)-N(4))-methyltransferase RsmH"/>
    <property type="match status" value="1"/>
</dbReference>
<dbReference type="PANTHER" id="PTHR11265:SF0">
    <property type="entry name" value="12S RRNA N4-METHYLCYTIDINE METHYLTRANSFERASE"/>
    <property type="match status" value="1"/>
</dbReference>
<dbReference type="PANTHER" id="PTHR11265">
    <property type="entry name" value="S-ADENOSYL-METHYLTRANSFERASE MRAW"/>
    <property type="match status" value="1"/>
</dbReference>
<dbReference type="Pfam" id="PF01795">
    <property type="entry name" value="Methyltransf_5"/>
    <property type="match status" value="1"/>
</dbReference>
<dbReference type="PIRSF" id="PIRSF004486">
    <property type="entry name" value="MraW"/>
    <property type="match status" value="1"/>
</dbReference>
<dbReference type="SUPFAM" id="SSF81799">
    <property type="entry name" value="Putative methyltransferase TM0872, insert domain"/>
    <property type="match status" value="1"/>
</dbReference>
<dbReference type="SUPFAM" id="SSF53335">
    <property type="entry name" value="S-adenosyl-L-methionine-dependent methyltransferases"/>
    <property type="match status" value="1"/>
</dbReference>
<evidence type="ECO:0000255" key="1">
    <source>
        <dbReference type="HAMAP-Rule" id="MF_01007"/>
    </source>
</evidence>
<evidence type="ECO:0000256" key="2">
    <source>
        <dbReference type="SAM" id="MobiDB-lite"/>
    </source>
</evidence>
<proteinExistence type="inferred from homology"/>
<feature type="chain" id="PRO_1000062830" description="Ribosomal RNA small subunit methyltransferase H">
    <location>
        <begin position="1"/>
        <end position="329"/>
    </location>
</feature>
<feature type="region of interest" description="Disordered" evidence="2">
    <location>
        <begin position="289"/>
        <end position="308"/>
    </location>
</feature>
<feature type="binding site" evidence="1">
    <location>
        <begin position="39"/>
        <end position="41"/>
    </location>
    <ligand>
        <name>S-adenosyl-L-methionine</name>
        <dbReference type="ChEBI" id="CHEBI:59789"/>
    </ligand>
</feature>
<feature type="binding site" evidence="1">
    <location>
        <position position="56"/>
    </location>
    <ligand>
        <name>S-adenosyl-L-methionine</name>
        <dbReference type="ChEBI" id="CHEBI:59789"/>
    </ligand>
</feature>
<feature type="binding site" evidence="1">
    <location>
        <position position="85"/>
    </location>
    <ligand>
        <name>S-adenosyl-L-methionine</name>
        <dbReference type="ChEBI" id="CHEBI:59789"/>
    </ligand>
</feature>
<feature type="binding site" evidence="1">
    <location>
        <position position="106"/>
    </location>
    <ligand>
        <name>S-adenosyl-L-methionine</name>
        <dbReference type="ChEBI" id="CHEBI:59789"/>
    </ligand>
</feature>
<feature type="binding site" evidence="1">
    <location>
        <position position="113"/>
    </location>
    <ligand>
        <name>S-adenosyl-L-methionine</name>
        <dbReference type="ChEBI" id="CHEBI:59789"/>
    </ligand>
</feature>
<organism>
    <name type="scientific">Novosphingobium aromaticivorans (strain ATCC 700278 / DSM 12444 / CCUG 56034 / CIP 105152 / NBRC 16084 / F199)</name>
    <dbReference type="NCBI Taxonomy" id="279238"/>
    <lineage>
        <taxon>Bacteria</taxon>
        <taxon>Pseudomonadati</taxon>
        <taxon>Pseudomonadota</taxon>
        <taxon>Alphaproteobacteria</taxon>
        <taxon>Sphingomonadales</taxon>
        <taxon>Sphingomonadaceae</taxon>
        <taxon>Novosphingobium</taxon>
    </lineage>
</organism>
<reference key="1">
    <citation type="submission" date="2006-01" db="EMBL/GenBank/DDBJ databases">
        <title>Complete sequence of Novosphingobium aromaticivorans DSM 12444.</title>
        <authorList>
            <consortium name="US DOE Joint Genome Institute"/>
            <person name="Copeland A."/>
            <person name="Lucas S."/>
            <person name="Lapidus A."/>
            <person name="Barry K."/>
            <person name="Detter J.C."/>
            <person name="Glavina T."/>
            <person name="Hammon N."/>
            <person name="Israni S."/>
            <person name="Pitluck S."/>
            <person name="Chain P."/>
            <person name="Malfatti S."/>
            <person name="Shin M."/>
            <person name="Vergez L."/>
            <person name="Schmutz J."/>
            <person name="Larimer F."/>
            <person name="Land M."/>
            <person name="Kyrpides N."/>
            <person name="Ivanova N."/>
            <person name="Fredrickson J."/>
            <person name="Balkwill D."/>
            <person name="Romine M.F."/>
            <person name="Richardson P."/>
        </authorList>
    </citation>
    <scope>NUCLEOTIDE SEQUENCE [LARGE SCALE GENOMIC DNA]</scope>
    <source>
        <strain>ATCC 700278 / DSM 12444 / CCUG 56034 / CIP 105152 / NBRC 16084 / F199</strain>
    </source>
</reference>
<sequence>MSAETGSRAPHIPVLLEEVVAALDPKPGDLIVDATFGAGGYTRRLLDAGATVHAFDRDPDAIAAGKLWGETCGKEPRLVLHPRRFSEIAEGLAEAGIAGVQGVVFDIGVSSMQLDQAARGFAFSSDGPLDMRMSQEGPSAADFLNEADEGEIADVLYRYGEERQSRRIARAIVAARPLTTTAQFAAVVRKALGYRPDIKGPKAPKDPATRSFQAVRIHVNGELDELVQGLAAAEKVLVPGGRIAVVSFHSLEDRIVKQFLREGAGAVPAGSRHLPQLESKVQAVFEKPSGAIRPTPEEEARNPRARSATLRCAVRTAAPARAHQGRAAA</sequence>
<gene>
    <name evidence="1" type="primary">rsmH</name>
    <name type="synonym">mraW</name>
    <name type="ordered locus">Saro_1125</name>
</gene>
<accession>Q2G9A3</accession>
<keyword id="KW-0963">Cytoplasm</keyword>
<keyword id="KW-0489">Methyltransferase</keyword>
<keyword id="KW-1185">Reference proteome</keyword>
<keyword id="KW-0698">rRNA processing</keyword>
<keyword id="KW-0949">S-adenosyl-L-methionine</keyword>
<keyword id="KW-0808">Transferase</keyword>
<protein>
    <recommendedName>
        <fullName evidence="1">Ribosomal RNA small subunit methyltransferase H</fullName>
        <ecNumber evidence="1">2.1.1.199</ecNumber>
    </recommendedName>
    <alternativeName>
        <fullName evidence="1">16S rRNA m(4)C1402 methyltransferase</fullName>
    </alternativeName>
    <alternativeName>
        <fullName evidence="1">rRNA (cytosine-N(4)-)-methyltransferase RsmH</fullName>
    </alternativeName>
</protein>